<gene>
    <name type="primary">pseI</name>
    <name type="ordered locus">HP_0178</name>
</gene>
<sequence>MLQPPKIVAELSANHNQDLNLAKESLHAIKESGADFVKLQTYTPSCMTLNSKEDPFIIQGTLWDKENLYELYQKASTPLEWHAELFELARKLDLGIFSSPFSSQALELLESLNCPMYKIASFEIVDLDLIEKAARTQKPIILSSGIATHTELQDAISLCRRVNNFDITLLKCVSAYPSKIEDANLLSMVKLGEIFGVKFGLSDHTIGSLCPILATTLGASMIEKHFILNKSLQTPDSAFSMDFNGFKSMVEAIKQSVLALGEEEPRINPKTLEKRRFFARSLFVIKDIQKGEALTENNIKALRPNLGLHPKFYKEILGQKASKFLKANTPLSADDIERSL</sequence>
<evidence type="ECO:0000250" key="1"/>
<evidence type="ECO:0000255" key="2">
    <source>
        <dbReference type="PROSITE-ProRule" id="PRU00021"/>
    </source>
</evidence>
<evidence type="ECO:0000305" key="3"/>
<accession>O24980</accession>
<dbReference type="EC" id="2.5.1.97"/>
<dbReference type="EMBL" id="AE000511">
    <property type="protein sequence ID" value="AAD07248.1"/>
    <property type="molecule type" value="Genomic_DNA"/>
</dbReference>
<dbReference type="PIR" id="B64542">
    <property type="entry name" value="B64542"/>
</dbReference>
<dbReference type="RefSeq" id="NP_206977.1">
    <property type="nucleotide sequence ID" value="NC_000915.1"/>
</dbReference>
<dbReference type="RefSeq" id="WP_000941291.1">
    <property type="nucleotide sequence ID" value="NC_018939.1"/>
</dbReference>
<dbReference type="SMR" id="O24980"/>
<dbReference type="DIP" id="DIP-3369N"/>
<dbReference type="IntAct" id="O24980">
    <property type="interactions" value="6"/>
</dbReference>
<dbReference type="MINT" id="O24980"/>
<dbReference type="STRING" id="85962.HP_0178"/>
<dbReference type="PaxDb" id="85962-C694_00885"/>
<dbReference type="EnsemblBacteria" id="AAD07248">
    <property type="protein sequence ID" value="AAD07248"/>
    <property type="gene ID" value="HP_0178"/>
</dbReference>
<dbReference type="KEGG" id="heo:C694_00885"/>
<dbReference type="KEGG" id="hpy:HP_0178"/>
<dbReference type="PATRIC" id="fig|85962.47.peg.193"/>
<dbReference type="eggNOG" id="COG2089">
    <property type="taxonomic scope" value="Bacteria"/>
</dbReference>
<dbReference type="InParanoid" id="O24980"/>
<dbReference type="OrthoDB" id="9781701at2"/>
<dbReference type="PhylomeDB" id="O24980"/>
<dbReference type="Proteomes" id="UP000000429">
    <property type="component" value="Chromosome"/>
</dbReference>
<dbReference type="GO" id="GO:0046872">
    <property type="term" value="F:metal ion binding"/>
    <property type="evidence" value="ECO:0007669"/>
    <property type="project" value="UniProtKB-KW"/>
</dbReference>
<dbReference type="GO" id="GO:0047444">
    <property type="term" value="F:N-acylneuraminate-9-phosphate synthase activity"/>
    <property type="evidence" value="ECO:0000318"/>
    <property type="project" value="GO_Central"/>
</dbReference>
<dbReference type="GO" id="GO:0016051">
    <property type="term" value="P:carbohydrate biosynthetic process"/>
    <property type="evidence" value="ECO:0007669"/>
    <property type="project" value="InterPro"/>
</dbReference>
<dbReference type="GO" id="GO:0070085">
    <property type="term" value="P:glycosylation"/>
    <property type="evidence" value="ECO:0000318"/>
    <property type="project" value="GO_Central"/>
</dbReference>
<dbReference type="CDD" id="cd11615">
    <property type="entry name" value="SAF_NeuB_like"/>
    <property type="match status" value="1"/>
</dbReference>
<dbReference type="Gene3D" id="3.20.20.70">
    <property type="entry name" value="Aldolase class I"/>
    <property type="match status" value="1"/>
</dbReference>
<dbReference type="Gene3D" id="3.90.1210.10">
    <property type="entry name" value="Antifreeze-like/N-acetylneuraminic acid synthase C-terminal domain"/>
    <property type="match status" value="1"/>
</dbReference>
<dbReference type="InterPro" id="IPR006190">
    <property type="entry name" value="AFP_Neu5c_C"/>
</dbReference>
<dbReference type="InterPro" id="IPR036732">
    <property type="entry name" value="AFP_Neu5c_C_sf"/>
</dbReference>
<dbReference type="InterPro" id="IPR013785">
    <property type="entry name" value="Aldolase_TIM"/>
</dbReference>
<dbReference type="InterPro" id="IPR013132">
    <property type="entry name" value="Neu5Ac_N"/>
</dbReference>
<dbReference type="InterPro" id="IPR051690">
    <property type="entry name" value="Nonulosonic_Acid_Synth"/>
</dbReference>
<dbReference type="InterPro" id="IPR020030">
    <property type="entry name" value="Pseudaminic_synth_PseI"/>
</dbReference>
<dbReference type="InterPro" id="IPR013974">
    <property type="entry name" value="SAF"/>
</dbReference>
<dbReference type="NCBIfam" id="TIGR03586">
    <property type="entry name" value="PseI"/>
    <property type="match status" value="1"/>
</dbReference>
<dbReference type="PANTHER" id="PTHR42966">
    <property type="entry name" value="N-ACETYLNEURAMINATE SYNTHASE"/>
    <property type="match status" value="1"/>
</dbReference>
<dbReference type="PANTHER" id="PTHR42966:SF2">
    <property type="entry name" value="PSEUDAMINIC ACID SYNTHASE"/>
    <property type="match status" value="1"/>
</dbReference>
<dbReference type="Pfam" id="PF03102">
    <property type="entry name" value="NeuB"/>
    <property type="match status" value="1"/>
</dbReference>
<dbReference type="Pfam" id="PF08666">
    <property type="entry name" value="SAF"/>
    <property type="match status" value="1"/>
</dbReference>
<dbReference type="SMART" id="SM00858">
    <property type="entry name" value="SAF"/>
    <property type="match status" value="1"/>
</dbReference>
<dbReference type="SUPFAM" id="SSF51269">
    <property type="entry name" value="AFP III-like domain"/>
    <property type="match status" value="1"/>
</dbReference>
<dbReference type="SUPFAM" id="SSF51569">
    <property type="entry name" value="Aldolase"/>
    <property type="match status" value="1"/>
</dbReference>
<dbReference type="PROSITE" id="PS50844">
    <property type="entry name" value="AFP_LIKE"/>
    <property type="match status" value="1"/>
</dbReference>
<feature type="chain" id="PRO_0000418933" description="Pseudaminic acid synthase">
    <location>
        <begin position="1"/>
        <end position="340"/>
    </location>
</feature>
<feature type="domain" description="AFP-like" evidence="2">
    <location>
        <begin position="281"/>
        <end position="337"/>
    </location>
</feature>
<keyword id="KW-0479">Metal-binding</keyword>
<keyword id="KW-1185">Reference proteome</keyword>
<keyword id="KW-0808">Transferase</keyword>
<reference key="1">
    <citation type="journal article" date="1997" name="Nature">
        <title>The complete genome sequence of the gastric pathogen Helicobacter pylori.</title>
        <authorList>
            <person name="Tomb J.-F."/>
            <person name="White O."/>
            <person name="Kerlavage A.R."/>
            <person name="Clayton R.A."/>
            <person name="Sutton G.G."/>
            <person name="Fleischmann R.D."/>
            <person name="Ketchum K.A."/>
            <person name="Klenk H.-P."/>
            <person name="Gill S.R."/>
            <person name="Dougherty B.A."/>
            <person name="Nelson K.E."/>
            <person name="Quackenbush J."/>
            <person name="Zhou L."/>
            <person name="Kirkness E.F."/>
            <person name="Peterson S.N."/>
            <person name="Loftus B.J."/>
            <person name="Richardson D.L."/>
            <person name="Dodson R.J."/>
            <person name="Khalak H.G."/>
            <person name="Glodek A."/>
            <person name="McKenney K."/>
            <person name="FitzGerald L.M."/>
            <person name="Lee N."/>
            <person name="Adams M.D."/>
            <person name="Hickey E.K."/>
            <person name="Berg D.E."/>
            <person name="Gocayne J.D."/>
            <person name="Utterback T.R."/>
            <person name="Peterson J.D."/>
            <person name="Kelley J.M."/>
            <person name="Cotton M.D."/>
            <person name="Weidman J.F."/>
            <person name="Fujii C."/>
            <person name="Bowman C."/>
            <person name="Watthey L."/>
            <person name="Wallin E."/>
            <person name="Hayes W.S."/>
            <person name="Borodovsky M."/>
            <person name="Karp P.D."/>
            <person name="Smith H.O."/>
            <person name="Fraser C.M."/>
            <person name="Venter J.C."/>
        </authorList>
    </citation>
    <scope>NUCLEOTIDE SEQUENCE [LARGE SCALE GENOMIC DNA]</scope>
    <source>
        <strain>ATCC 700392 / 26695</strain>
    </source>
</reference>
<reference key="2">
    <citation type="journal article" date="2003" name="Mol. Microbiol.">
        <title>Structural, genetic and functional characterization of the flagellin glycosylation process in Helicobacter pylori.</title>
        <authorList>
            <person name="Schirm M."/>
            <person name="Soo E.C."/>
            <person name="Aubry A.J."/>
            <person name="Austin J."/>
            <person name="Thibault P."/>
            <person name="Logan S.M."/>
        </authorList>
    </citation>
    <scope>IDENTIFICATION</scope>
</reference>
<reference key="3">
    <citation type="journal article" date="2006" name="Glycobiology">
        <title>Elucidation of the CMP-pseudaminic acid pathway in Helicobacter pylori: synthesis from UDP-N-acetylglucosamine by a single enzymatic reaction.</title>
        <authorList>
            <person name="Schoenhofen I.C."/>
            <person name="McNally D.J."/>
            <person name="Brisson J.R."/>
            <person name="Logan S.M."/>
        </authorList>
    </citation>
    <scope>PATHWAY</scope>
    <source>
        <strain>ATCC 700392 / 26695</strain>
    </source>
</reference>
<protein>
    <recommendedName>
        <fullName>Pseudaminic acid synthase</fullName>
        <ecNumber>2.5.1.97</ecNumber>
    </recommendedName>
    <alternativeName>
        <fullName>Pseudaminic acid biosynthesis protein I</fullName>
    </alternativeName>
</protein>
<name>PSEI_HELPY</name>
<organism>
    <name type="scientific">Helicobacter pylori (strain ATCC 700392 / 26695)</name>
    <name type="common">Campylobacter pylori</name>
    <dbReference type="NCBI Taxonomy" id="85962"/>
    <lineage>
        <taxon>Bacteria</taxon>
        <taxon>Pseudomonadati</taxon>
        <taxon>Campylobacterota</taxon>
        <taxon>Epsilonproteobacteria</taxon>
        <taxon>Campylobacterales</taxon>
        <taxon>Helicobacteraceae</taxon>
        <taxon>Helicobacter</taxon>
    </lineage>
</organism>
<comment type="function">
    <text evidence="1">Catalyzes the fifth step in the biosynthesis of pseudaminic acid, a sialic-acid-like sugar that is used to modify flagellin. Catalyzes the condensation of phosphoenolpyruvate with 2,4-diacetamido-2,4,6-trideoxy-beta-l-altropyranose, forming pseudaminic acid (By similarity).</text>
</comment>
<comment type="catalytic activity">
    <reaction>
        <text>2,4-diacetamido-2,4,6-trideoxy-beta-L-altrose + phosphoenolpyruvate + H2O = pseudaminate + phosphate</text>
        <dbReference type="Rhea" id="RHEA:31631"/>
        <dbReference type="ChEBI" id="CHEBI:15377"/>
        <dbReference type="ChEBI" id="CHEBI:43474"/>
        <dbReference type="ChEBI" id="CHEBI:58702"/>
        <dbReference type="ChEBI" id="CHEBI:63282"/>
        <dbReference type="ChEBI" id="CHEBI:63283"/>
        <dbReference type="EC" id="2.5.1.97"/>
    </reaction>
</comment>
<comment type="cofactor">
    <cofactor evidence="1">
        <name>a divalent metal cation</name>
        <dbReference type="ChEBI" id="CHEBI:60240"/>
    </cofactor>
</comment>
<comment type="similarity">
    <text evidence="3">Belongs to the pseudaminic acid synthase family.</text>
</comment>
<proteinExistence type="inferred from homology"/>